<protein>
    <recommendedName>
        <fullName evidence="4">Small ribosomal subunit protein eS26B</fullName>
    </recommendedName>
    <alternativeName>
        <fullName>40S ribosomal protein S26-B</fullName>
    </alternativeName>
</protein>
<name>RS26B_SCHPO</name>
<reference key="1">
    <citation type="journal article" date="2002" name="Nature">
        <title>The genome sequence of Schizosaccharomyces pombe.</title>
        <authorList>
            <person name="Wood V."/>
            <person name="Gwilliam R."/>
            <person name="Rajandream M.A."/>
            <person name="Lyne M.H."/>
            <person name="Lyne R."/>
            <person name="Stewart A."/>
            <person name="Sgouros J.G."/>
            <person name="Peat N."/>
            <person name="Hayles J."/>
            <person name="Baker S.G."/>
            <person name="Basham D."/>
            <person name="Bowman S."/>
            <person name="Brooks K."/>
            <person name="Brown D."/>
            <person name="Brown S."/>
            <person name="Chillingworth T."/>
            <person name="Churcher C.M."/>
            <person name="Collins M."/>
            <person name="Connor R."/>
            <person name="Cronin A."/>
            <person name="Davis P."/>
            <person name="Feltwell T."/>
            <person name="Fraser A."/>
            <person name="Gentles S."/>
            <person name="Goble A."/>
            <person name="Hamlin N."/>
            <person name="Harris D.E."/>
            <person name="Hidalgo J."/>
            <person name="Hodgson G."/>
            <person name="Holroyd S."/>
            <person name="Hornsby T."/>
            <person name="Howarth S."/>
            <person name="Huckle E.J."/>
            <person name="Hunt S."/>
            <person name="Jagels K."/>
            <person name="James K.D."/>
            <person name="Jones L."/>
            <person name="Jones M."/>
            <person name="Leather S."/>
            <person name="McDonald S."/>
            <person name="McLean J."/>
            <person name="Mooney P."/>
            <person name="Moule S."/>
            <person name="Mungall K.L."/>
            <person name="Murphy L.D."/>
            <person name="Niblett D."/>
            <person name="Odell C."/>
            <person name="Oliver K."/>
            <person name="O'Neil S."/>
            <person name="Pearson D."/>
            <person name="Quail M.A."/>
            <person name="Rabbinowitsch E."/>
            <person name="Rutherford K.M."/>
            <person name="Rutter S."/>
            <person name="Saunders D."/>
            <person name="Seeger K."/>
            <person name="Sharp S."/>
            <person name="Skelton J."/>
            <person name="Simmonds M.N."/>
            <person name="Squares R."/>
            <person name="Squares S."/>
            <person name="Stevens K."/>
            <person name="Taylor K."/>
            <person name="Taylor R.G."/>
            <person name="Tivey A."/>
            <person name="Walsh S.V."/>
            <person name="Warren T."/>
            <person name="Whitehead S."/>
            <person name="Woodward J.R."/>
            <person name="Volckaert G."/>
            <person name="Aert R."/>
            <person name="Robben J."/>
            <person name="Grymonprez B."/>
            <person name="Weltjens I."/>
            <person name="Vanstreels E."/>
            <person name="Rieger M."/>
            <person name="Schaefer M."/>
            <person name="Mueller-Auer S."/>
            <person name="Gabel C."/>
            <person name="Fuchs M."/>
            <person name="Duesterhoeft A."/>
            <person name="Fritzc C."/>
            <person name="Holzer E."/>
            <person name="Moestl D."/>
            <person name="Hilbert H."/>
            <person name="Borzym K."/>
            <person name="Langer I."/>
            <person name="Beck A."/>
            <person name="Lehrach H."/>
            <person name="Reinhardt R."/>
            <person name="Pohl T.M."/>
            <person name="Eger P."/>
            <person name="Zimmermann W."/>
            <person name="Wedler H."/>
            <person name="Wambutt R."/>
            <person name="Purnelle B."/>
            <person name="Goffeau A."/>
            <person name="Cadieu E."/>
            <person name="Dreano S."/>
            <person name="Gloux S."/>
            <person name="Lelaure V."/>
            <person name="Mottier S."/>
            <person name="Galibert F."/>
            <person name="Aves S.J."/>
            <person name="Xiang Z."/>
            <person name="Hunt C."/>
            <person name="Moore K."/>
            <person name="Hurst S.M."/>
            <person name="Lucas M."/>
            <person name="Rochet M."/>
            <person name="Gaillardin C."/>
            <person name="Tallada V.A."/>
            <person name="Garzon A."/>
            <person name="Thode G."/>
            <person name="Daga R.R."/>
            <person name="Cruzado L."/>
            <person name="Jimenez J."/>
            <person name="Sanchez M."/>
            <person name="del Rey F."/>
            <person name="Benito J."/>
            <person name="Dominguez A."/>
            <person name="Revuelta J.L."/>
            <person name="Moreno S."/>
            <person name="Armstrong J."/>
            <person name="Forsburg S.L."/>
            <person name="Cerutti L."/>
            <person name="Lowe T."/>
            <person name="McCombie W.R."/>
            <person name="Paulsen I."/>
            <person name="Potashkin J."/>
            <person name="Shpakovski G.V."/>
            <person name="Ussery D."/>
            <person name="Barrell B.G."/>
            <person name="Nurse P."/>
        </authorList>
    </citation>
    <scope>NUCLEOTIDE SEQUENCE [LARGE SCALE GENOMIC DNA]</scope>
    <source>
        <strain>972 / ATCC 24843</strain>
    </source>
</reference>
<reference key="2">
    <citation type="submission" date="1999-07" db="EMBL/GenBank/DDBJ databases">
        <title>S.pombe ribosomal protein S26 homolog.</title>
        <authorList>
            <person name="Kawamukai M."/>
        </authorList>
    </citation>
    <scope>NUCLEOTIDE SEQUENCE [MRNA] OF 7-119</scope>
</reference>
<reference key="3">
    <citation type="journal article" date="2006" name="Nat. Biotechnol.">
        <title>ORFeome cloning and global analysis of protein localization in the fission yeast Schizosaccharomyces pombe.</title>
        <authorList>
            <person name="Matsuyama A."/>
            <person name="Arai R."/>
            <person name="Yashiroda Y."/>
            <person name="Shirai A."/>
            <person name="Kamata A."/>
            <person name="Sekido S."/>
            <person name="Kobayashi Y."/>
            <person name="Hashimoto A."/>
            <person name="Hamamoto M."/>
            <person name="Hiraoka Y."/>
            <person name="Horinouchi S."/>
            <person name="Yoshida M."/>
        </authorList>
    </citation>
    <scope>SUBCELLULAR LOCATION [LARGE SCALE ANALYSIS]</scope>
</reference>
<comment type="function">
    <text evidence="1">Component of the ribosome, a large ribonucleoprotein complex responsible for the synthesis of proteins in the cell. The small ribosomal subunit (SSU) binds messenger RNAs (mRNAs) and translates the encoded message by selecting cognate aminoacyl-transfer RNA (tRNA) molecules. The large subunit (LSU) contains the ribosomal catalytic site termed the peptidyl transferase center (PTC), which catalyzes the formation of peptide bonds, thereby polymerizing the amino acids delivered by tRNAs into a polypeptide chain. The nascent polypeptides leave the ribosome through a tunnel in the LSU and interact with protein factors that function in enzymatic processing, targeting, and the membrane insertion of nascent chains at the exit of the ribosomal tunnel.</text>
</comment>
<comment type="subunit">
    <text evidence="1">Component of the small ribosomal subunit (SSU). Mature yeast ribosomes consist of a small (40S) and a large (60S) subunit. The 40S small subunit contains 1 molecule of ribosomal RNA (18S rRNA) and at least 33 different proteins. The large 60S subunit contains 3 rRNA molecules (25S, 5.8S and 5S rRNA) and at least 46 different proteins. eS26 interacts with eS1 forming part of the mRNA exit tunnel. eS26 interacts with TSR2.</text>
</comment>
<comment type="subcellular location">
    <subcellularLocation>
        <location evidence="3">Cytoplasm</location>
    </subcellularLocation>
</comment>
<comment type="miscellaneous">
    <text>There are 2 genes for eS26 in S.pombe.</text>
</comment>
<comment type="similarity">
    <text evidence="4">Belongs to the eukaryotic ribosomal protein eS26 family.</text>
</comment>
<gene>
    <name type="primary">rps2602</name>
    <name type="synonym">rps26b</name>
    <name type="ORF">SPAC1805.11c</name>
</gene>
<sequence>MTQKRRNNGRNKHGRGHVKFVRCINCSRAVPKDKAIKRWTIRNMVETAAIRDLSEASVYSEYTIPKLYIKLQYCVSCAIHSRVVRVRSREGRRIRTPPPRVRYNRDGKKVNPTAVAKNL</sequence>
<accession>Q9UTG4</accession>
<accession>Q9Y8H0</accession>
<keyword id="KW-0002">3D-structure</keyword>
<keyword id="KW-0963">Cytoplasm</keyword>
<keyword id="KW-1185">Reference proteome</keyword>
<keyword id="KW-0687">Ribonucleoprotein</keyword>
<keyword id="KW-0689">Ribosomal protein</keyword>
<feature type="chain" id="PRO_0000204527" description="Small ribosomal subunit protein eS26B">
    <location>
        <begin position="1"/>
        <end position="119"/>
    </location>
</feature>
<feature type="region of interest" description="Disordered" evidence="2">
    <location>
        <begin position="88"/>
        <end position="119"/>
    </location>
</feature>
<evidence type="ECO:0000250" key="1">
    <source>
        <dbReference type="UniProtKB" id="P39939"/>
    </source>
</evidence>
<evidence type="ECO:0000256" key="2">
    <source>
        <dbReference type="SAM" id="MobiDB-lite"/>
    </source>
</evidence>
<evidence type="ECO:0000269" key="3">
    <source>
    </source>
</evidence>
<evidence type="ECO:0000305" key="4"/>
<organism>
    <name type="scientific">Schizosaccharomyces pombe (strain 972 / ATCC 24843)</name>
    <name type="common">Fission yeast</name>
    <dbReference type="NCBI Taxonomy" id="284812"/>
    <lineage>
        <taxon>Eukaryota</taxon>
        <taxon>Fungi</taxon>
        <taxon>Dikarya</taxon>
        <taxon>Ascomycota</taxon>
        <taxon>Taphrinomycotina</taxon>
        <taxon>Schizosaccharomycetes</taxon>
        <taxon>Schizosaccharomycetales</taxon>
        <taxon>Schizosaccharomycetaceae</taxon>
        <taxon>Schizosaccharomyces</taxon>
    </lineage>
</organism>
<dbReference type="EMBL" id="CU329670">
    <property type="protein sequence ID" value="CAB55852.1"/>
    <property type="molecule type" value="Genomic_DNA"/>
</dbReference>
<dbReference type="EMBL" id="AB029514">
    <property type="protein sequence ID" value="BAA82318.1"/>
    <property type="molecule type" value="mRNA"/>
</dbReference>
<dbReference type="PIR" id="T37896">
    <property type="entry name" value="T37896"/>
</dbReference>
<dbReference type="PIR" id="T43515">
    <property type="entry name" value="T43515"/>
</dbReference>
<dbReference type="RefSeq" id="NP_593922.1">
    <property type="nucleotide sequence ID" value="NM_001019351.2"/>
</dbReference>
<dbReference type="PDB" id="9AXT">
    <property type="method" value="EM"/>
    <property type="resolution" value="2.40 A"/>
    <property type="chains" value="Ag=1-119"/>
</dbReference>
<dbReference type="PDB" id="9AXV">
    <property type="method" value="EM"/>
    <property type="resolution" value="2.40 A"/>
    <property type="chains" value="Ag=1-119"/>
</dbReference>
<dbReference type="PDBsum" id="9AXT"/>
<dbReference type="PDBsum" id="9AXV"/>
<dbReference type="EMDB" id="EMD-43972"/>
<dbReference type="EMDB" id="EMD-43976"/>
<dbReference type="SMR" id="Q9UTG4"/>
<dbReference type="BioGRID" id="278995">
    <property type="interactions" value="10"/>
</dbReference>
<dbReference type="FunCoup" id="Q9UTG4">
    <property type="interactions" value="451"/>
</dbReference>
<dbReference type="STRING" id="284812.Q9UTG4"/>
<dbReference type="iPTMnet" id="Q9UTG4"/>
<dbReference type="PaxDb" id="4896-SPAC1805.11c.1"/>
<dbReference type="EnsemblFungi" id="SPAC1805.11c.1">
    <property type="protein sequence ID" value="SPAC1805.11c.1:pep"/>
    <property type="gene ID" value="SPAC1805.11c"/>
</dbReference>
<dbReference type="GeneID" id="2542538"/>
<dbReference type="KEGG" id="spo:2542538"/>
<dbReference type="PomBase" id="SPAC1805.11c">
    <property type="gene designation" value="rps2602"/>
</dbReference>
<dbReference type="VEuPathDB" id="FungiDB:SPAC1805.11c"/>
<dbReference type="eggNOG" id="KOG1768">
    <property type="taxonomic scope" value="Eukaryota"/>
</dbReference>
<dbReference type="HOGENOM" id="CLU_129451_1_0_1"/>
<dbReference type="InParanoid" id="Q9UTG4"/>
<dbReference type="OMA" id="KCYCVSC"/>
<dbReference type="PhylomeDB" id="Q9UTG4"/>
<dbReference type="Reactome" id="R-SPO-156827">
    <property type="pathway name" value="L13a-mediated translational silencing of Ceruloplasmin expression"/>
</dbReference>
<dbReference type="Reactome" id="R-SPO-1799339">
    <property type="pathway name" value="SRP-dependent cotranslational protein targeting to membrane"/>
</dbReference>
<dbReference type="Reactome" id="R-SPO-72649">
    <property type="pathway name" value="Translation initiation complex formation"/>
</dbReference>
<dbReference type="Reactome" id="R-SPO-72689">
    <property type="pathway name" value="Formation of a pool of free 40S subunits"/>
</dbReference>
<dbReference type="Reactome" id="R-SPO-72695">
    <property type="pathway name" value="Formation of the ternary complex, and subsequently, the 43S complex"/>
</dbReference>
<dbReference type="Reactome" id="R-SPO-72702">
    <property type="pathway name" value="Ribosomal scanning and start codon recognition"/>
</dbReference>
<dbReference type="Reactome" id="R-SPO-72706">
    <property type="pathway name" value="GTP hydrolysis and joining of the 60S ribosomal subunit"/>
</dbReference>
<dbReference type="Reactome" id="R-SPO-975956">
    <property type="pathway name" value="Nonsense Mediated Decay (NMD) independent of the Exon Junction Complex (EJC)"/>
</dbReference>
<dbReference type="Reactome" id="R-SPO-975957">
    <property type="pathway name" value="Nonsense Mediated Decay (NMD) enhanced by the Exon Junction Complex (EJC)"/>
</dbReference>
<dbReference type="PRO" id="PR:Q9UTG4"/>
<dbReference type="Proteomes" id="UP000002485">
    <property type="component" value="Chromosome I"/>
</dbReference>
<dbReference type="GO" id="GO:0005829">
    <property type="term" value="C:cytosol"/>
    <property type="evidence" value="ECO:0007005"/>
    <property type="project" value="PomBase"/>
</dbReference>
<dbReference type="GO" id="GO:0022627">
    <property type="term" value="C:cytosolic small ribosomal subunit"/>
    <property type="evidence" value="ECO:0000269"/>
    <property type="project" value="PomBase"/>
</dbReference>
<dbReference type="GO" id="GO:0003729">
    <property type="term" value="F:mRNA binding"/>
    <property type="evidence" value="ECO:0000318"/>
    <property type="project" value="GO_Central"/>
</dbReference>
<dbReference type="GO" id="GO:0003735">
    <property type="term" value="F:structural constituent of ribosome"/>
    <property type="evidence" value="ECO:0000318"/>
    <property type="project" value="GO_Central"/>
</dbReference>
<dbReference type="GO" id="GO:0002181">
    <property type="term" value="P:cytoplasmic translation"/>
    <property type="evidence" value="ECO:0000266"/>
    <property type="project" value="PomBase"/>
</dbReference>
<dbReference type="GO" id="GO:0042254">
    <property type="term" value="P:ribosome biogenesis"/>
    <property type="evidence" value="ECO:0000266"/>
    <property type="project" value="PomBase"/>
</dbReference>
<dbReference type="FunFam" id="3.30.1740.20:FF:000001">
    <property type="entry name" value="40S ribosomal protein S26"/>
    <property type="match status" value="1"/>
</dbReference>
<dbReference type="Gene3D" id="3.30.1740.20">
    <property type="entry name" value="Ribosomal protein S26e"/>
    <property type="match status" value="1"/>
</dbReference>
<dbReference type="InterPro" id="IPR000892">
    <property type="entry name" value="Ribosomal_eS26"/>
</dbReference>
<dbReference type="InterPro" id="IPR047864">
    <property type="entry name" value="Ribosomal_eS26_CS"/>
</dbReference>
<dbReference type="InterPro" id="IPR038551">
    <property type="entry name" value="Ribosomal_eS26_sf"/>
</dbReference>
<dbReference type="PANTHER" id="PTHR12538">
    <property type="entry name" value="40S RIBOSOMAL PROTEIN S26"/>
    <property type="match status" value="1"/>
</dbReference>
<dbReference type="PANTHER" id="PTHR12538:SF0">
    <property type="entry name" value="40S RIBOSOMAL PROTEIN S26"/>
    <property type="match status" value="1"/>
</dbReference>
<dbReference type="Pfam" id="PF01283">
    <property type="entry name" value="Ribosomal_S26e"/>
    <property type="match status" value="1"/>
</dbReference>
<dbReference type="PROSITE" id="PS00733">
    <property type="entry name" value="RIBOSOMAL_S26E"/>
    <property type="match status" value="1"/>
</dbReference>
<proteinExistence type="evidence at protein level"/>